<feature type="chain" id="PRO_1000001591" description="Recombination protein RecR">
    <location>
        <begin position="1"/>
        <end position="201"/>
    </location>
</feature>
<feature type="domain" description="Toprim" evidence="1">
    <location>
        <begin position="83"/>
        <end position="178"/>
    </location>
</feature>
<feature type="zinc finger region" description="C4-type" evidence="1">
    <location>
        <begin position="60"/>
        <end position="75"/>
    </location>
</feature>
<sequence>MAKRVTGPEIEKLIQLLAKVPGLGPRSARRAALHLIKKKDQLLGPLSNAMGEAYDKVKICSRCGNVDTVDPCTVCTDTQRDQSVIIVVEDVSDLWALERAGAMNAAYHVLGGTLSPLDGIGPDDLNIRGLIDRVGEGGIRELIIAVNATVEGQTTAHYITDQLQGLDVKITRLAHGVPVGGELDYLDEGTLAAALRARTVI</sequence>
<organism>
    <name type="scientific">Rhizobium etli (strain ATCC 51251 / DSM 11541 / JCM 21823 / NBRC 15573 / CFN 42)</name>
    <dbReference type="NCBI Taxonomy" id="347834"/>
    <lineage>
        <taxon>Bacteria</taxon>
        <taxon>Pseudomonadati</taxon>
        <taxon>Pseudomonadota</taxon>
        <taxon>Alphaproteobacteria</taxon>
        <taxon>Hyphomicrobiales</taxon>
        <taxon>Rhizobiaceae</taxon>
        <taxon>Rhizobium/Agrobacterium group</taxon>
        <taxon>Rhizobium</taxon>
    </lineage>
</organism>
<proteinExistence type="inferred from homology"/>
<accession>Q2KDY8</accession>
<name>RECR_RHIEC</name>
<evidence type="ECO:0000255" key="1">
    <source>
        <dbReference type="HAMAP-Rule" id="MF_00017"/>
    </source>
</evidence>
<protein>
    <recommendedName>
        <fullName evidence="1">Recombination protein RecR</fullName>
    </recommendedName>
</protein>
<gene>
    <name evidence="1" type="primary">recR</name>
    <name type="ordered locus">RHE_CH00123</name>
</gene>
<keyword id="KW-0227">DNA damage</keyword>
<keyword id="KW-0233">DNA recombination</keyword>
<keyword id="KW-0234">DNA repair</keyword>
<keyword id="KW-0479">Metal-binding</keyword>
<keyword id="KW-1185">Reference proteome</keyword>
<keyword id="KW-0862">Zinc</keyword>
<keyword id="KW-0863">Zinc-finger</keyword>
<reference key="1">
    <citation type="journal article" date="2006" name="Proc. Natl. Acad. Sci. U.S.A.">
        <title>The partitioned Rhizobium etli genome: genetic and metabolic redundancy in seven interacting replicons.</title>
        <authorList>
            <person name="Gonzalez V."/>
            <person name="Santamaria R.I."/>
            <person name="Bustos P."/>
            <person name="Hernandez-Gonzalez I."/>
            <person name="Medrano-Soto A."/>
            <person name="Moreno-Hagelsieb G."/>
            <person name="Janga S.C."/>
            <person name="Ramirez M.A."/>
            <person name="Jimenez-Jacinto V."/>
            <person name="Collado-Vides J."/>
            <person name="Davila G."/>
        </authorList>
    </citation>
    <scope>NUCLEOTIDE SEQUENCE [LARGE SCALE GENOMIC DNA]</scope>
    <source>
        <strain>ATCC 51251 / DSM 11541 / JCM 21823 / NBRC 15573 / CFN 42</strain>
    </source>
</reference>
<dbReference type="EMBL" id="CP000133">
    <property type="protein sequence ID" value="ABC88948.1"/>
    <property type="molecule type" value="Genomic_DNA"/>
</dbReference>
<dbReference type="RefSeq" id="WP_011423518.1">
    <property type="nucleotide sequence ID" value="NC_007761.1"/>
</dbReference>
<dbReference type="SMR" id="Q2KDY8"/>
<dbReference type="KEGG" id="ret:RHE_CH00123"/>
<dbReference type="eggNOG" id="COG0353">
    <property type="taxonomic scope" value="Bacteria"/>
</dbReference>
<dbReference type="HOGENOM" id="CLU_060739_1_1_5"/>
<dbReference type="OrthoDB" id="9802672at2"/>
<dbReference type="Proteomes" id="UP000001936">
    <property type="component" value="Chromosome"/>
</dbReference>
<dbReference type="GO" id="GO:0003677">
    <property type="term" value="F:DNA binding"/>
    <property type="evidence" value="ECO:0007669"/>
    <property type="project" value="UniProtKB-UniRule"/>
</dbReference>
<dbReference type="GO" id="GO:0008270">
    <property type="term" value="F:zinc ion binding"/>
    <property type="evidence" value="ECO:0007669"/>
    <property type="project" value="UniProtKB-KW"/>
</dbReference>
<dbReference type="GO" id="GO:0006310">
    <property type="term" value="P:DNA recombination"/>
    <property type="evidence" value="ECO:0007669"/>
    <property type="project" value="UniProtKB-UniRule"/>
</dbReference>
<dbReference type="GO" id="GO:0006281">
    <property type="term" value="P:DNA repair"/>
    <property type="evidence" value="ECO:0007669"/>
    <property type="project" value="UniProtKB-UniRule"/>
</dbReference>
<dbReference type="CDD" id="cd01025">
    <property type="entry name" value="TOPRIM_recR"/>
    <property type="match status" value="1"/>
</dbReference>
<dbReference type="Gene3D" id="3.40.1360.10">
    <property type="match status" value="1"/>
</dbReference>
<dbReference type="Gene3D" id="6.10.250.240">
    <property type="match status" value="1"/>
</dbReference>
<dbReference type="Gene3D" id="1.10.8.420">
    <property type="entry name" value="RecR Domain 1"/>
    <property type="match status" value="1"/>
</dbReference>
<dbReference type="HAMAP" id="MF_00017">
    <property type="entry name" value="RecR"/>
    <property type="match status" value="1"/>
</dbReference>
<dbReference type="InterPro" id="IPR000093">
    <property type="entry name" value="DNA_Rcmb_RecR"/>
</dbReference>
<dbReference type="InterPro" id="IPR023627">
    <property type="entry name" value="Rcmb_RecR"/>
</dbReference>
<dbReference type="InterPro" id="IPR015967">
    <property type="entry name" value="Rcmb_RecR_Znf"/>
</dbReference>
<dbReference type="InterPro" id="IPR006171">
    <property type="entry name" value="TOPRIM_dom"/>
</dbReference>
<dbReference type="InterPro" id="IPR034137">
    <property type="entry name" value="TOPRIM_RecR"/>
</dbReference>
<dbReference type="NCBIfam" id="TIGR00615">
    <property type="entry name" value="recR"/>
    <property type="match status" value="1"/>
</dbReference>
<dbReference type="PANTHER" id="PTHR30446">
    <property type="entry name" value="RECOMBINATION PROTEIN RECR"/>
    <property type="match status" value="1"/>
</dbReference>
<dbReference type="PANTHER" id="PTHR30446:SF0">
    <property type="entry name" value="RECOMBINATION PROTEIN RECR"/>
    <property type="match status" value="1"/>
</dbReference>
<dbReference type="Pfam" id="PF21175">
    <property type="entry name" value="RecR_C"/>
    <property type="match status" value="1"/>
</dbReference>
<dbReference type="Pfam" id="PF21176">
    <property type="entry name" value="RecR_HhH"/>
    <property type="match status" value="1"/>
</dbReference>
<dbReference type="Pfam" id="PF02132">
    <property type="entry name" value="RecR_ZnF"/>
    <property type="match status" value="1"/>
</dbReference>
<dbReference type="Pfam" id="PF13662">
    <property type="entry name" value="Toprim_4"/>
    <property type="match status" value="1"/>
</dbReference>
<dbReference type="SMART" id="SM00493">
    <property type="entry name" value="TOPRIM"/>
    <property type="match status" value="1"/>
</dbReference>
<dbReference type="SUPFAM" id="SSF111304">
    <property type="entry name" value="Recombination protein RecR"/>
    <property type="match status" value="1"/>
</dbReference>
<dbReference type="PROSITE" id="PS01300">
    <property type="entry name" value="RECR"/>
    <property type="match status" value="1"/>
</dbReference>
<dbReference type="PROSITE" id="PS50880">
    <property type="entry name" value="TOPRIM"/>
    <property type="match status" value="1"/>
</dbReference>
<comment type="function">
    <text evidence="1">May play a role in DNA repair. It seems to be involved in an RecBC-independent recombinational process of DNA repair. It may act with RecF and RecO.</text>
</comment>
<comment type="similarity">
    <text evidence="1">Belongs to the RecR family.</text>
</comment>